<gene>
    <name evidence="1" type="primary">rpsT</name>
    <name type="ordered locus">TM1040_3031</name>
</gene>
<organism>
    <name type="scientific">Ruegeria sp. (strain TM1040)</name>
    <name type="common">Silicibacter sp.</name>
    <dbReference type="NCBI Taxonomy" id="292414"/>
    <lineage>
        <taxon>Bacteria</taxon>
        <taxon>Pseudomonadati</taxon>
        <taxon>Pseudomonadota</taxon>
        <taxon>Alphaproteobacteria</taxon>
        <taxon>Rhodobacterales</taxon>
        <taxon>Roseobacteraceae</taxon>
        <taxon>Ruegeria</taxon>
    </lineage>
</organism>
<name>RS20_RUEST</name>
<sequence length="87" mass="9702">MANSPQAKKRARQNEKRFAINKARRSRIRTFLRKVEEAIASGDKEAATAALRAAQPELMRGVTRGVYHKNTASRKISRLAARVKALG</sequence>
<evidence type="ECO:0000255" key="1">
    <source>
        <dbReference type="HAMAP-Rule" id="MF_00500"/>
    </source>
</evidence>
<evidence type="ECO:0000256" key="2">
    <source>
        <dbReference type="SAM" id="MobiDB-lite"/>
    </source>
</evidence>
<evidence type="ECO:0000305" key="3"/>
<dbReference type="EMBL" id="CP000377">
    <property type="protein sequence ID" value="ABF65763.1"/>
    <property type="molecule type" value="Genomic_DNA"/>
</dbReference>
<dbReference type="RefSeq" id="WP_011540341.1">
    <property type="nucleotide sequence ID" value="NC_008044.1"/>
</dbReference>
<dbReference type="SMR" id="Q1GC53"/>
<dbReference type="STRING" id="292414.TM1040_3031"/>
<dbReference type="KEGG" id="sit:TM1040_3031"/>
<dbReference type="eggNOG" id="COG0268">
    <property type="taxonomic scope" value="Bacteria"/>
</dbReference>
<dbReference type="HOGENOM" id="CLU_160655_3_0_5"/>
<dbReference type="OrthoDB" id="9807974at2"/>
<dbReference type="Proteomes" id="UP000000636">
    <property type="component" value="Chromosome"/>
</dbReference>
<dbReference type="GO" id="GO:0015935">
    <property type="term" value="C:small ribosomal subunit"/>
    <property type="evidence" value="ECO:0007669"/>
    <property type="project" value="TreeGrafter"/>
</dbReference>
<dbReference type="GO" id="GO:0070181">
    <property type="term" value="F:small ribosomal subunit rRNA binding"/>
    <property type="evidence" value="ECO:0007669"/>
    <property type="project" value="TreeGrafter"/>
</dbReference>
<dbReference type="GO" id="GO:0003735">
    <property type="term" value="F:structural constituent of ribosome"/>
    <property type="evidence" value="ECO:0007669"/>
    <property type="project" value="InterPro"/>
</dbReference>
<dbReference type="GO" id="GO:0006412">
    <property type="term" value="P:translation"/>
    <property type="evidence" value="ECO:0007669"/>
    <property type="project" value="UniProtKB-UniRule"/>
</dbReference>
<dbReference type="FunFam" id="1.20.58.110:FF:000001">
    <property type="entry name" value="30S ribosomal protein S20"/>
    <property type="match status" value="1"/>
</dbReference>
<dbReference type="Gene3D" id="1.20.58.110">
    <property type="entry name" value="Ribosomal protein S20"/>
    <property type="match status" value="1"/>
</dbReference>
<dbReference type="HAMAP" id="MF_00500">
    <property type="entry name" value="Ribosomal_bS20"/>
    <property type="match status" value="1"/>
</dbReference>
<dbReference type="InterPro" id="IPR002583">
    <property type="entry name" value="Ribosomal_bS20"/>
</dbReference>
<dbReference type="InterPro" id="IPR036510">
    <property type="entry name" value="Ribosomal_bS20_sf"/>
</dbReference>
<dbReference type="NCBIfam" id="TIGR00029">
    <property type="entry name" value="S20"/>
    <property type="match status" value="1"/>
</dbReference>
<dbReference type="PANTHER" id="PTHR33398">
    <property type="entry name" value="30S RIBOSOMAL PROTEIN S20"/>
    <property type="match status" value="1"/>
</dbReference>
<dbReference type="PANTHER" id="PTHR33398:SF1">
    <property type="entry name" value="SMALL RIBOSOMAL SUBUNIT PROTEIN BS20C"/>
    <property type="match status" value="1"/>
</dbReference>
<dbReference type="Pfam" id="PF01649">
    <property type="entry name" value="Ribosomal_S20p"/>
    <property type="match status" value="1"/>
</dbReference>
<dbReference type="SUPFAM" id="SSF46992">
    <property type="entry name" value="Ribosomal protein S20"/>
    <property type="match status" value="1"/>
</dbReference>
<comment type="function">
    <text evidence="1">Binds directly to 16S ribosomal RNA.</text>
</comment>
<comment type="similarity">
    <text evidence="1">Belongs to the bacterial ribosomal protein bS20 family.</text>
</comment>
<feature type="chain" id="PRO_0000260143" description="Small ribosomal subunit protein bS20">
    <location>
        <begin position="1"/>
        <end position="87"/>
    </location>
</feature>
<feature type="region of interest" description="Disordered" evidence="2">
    <location>
        <begin position="1"/>
        <end position="22"/>
    </location>
</feature>
<protein>
    <recommendedName>
        <fullName evidence="1">Small ribosomal subunit protein bS20</fullName>
    </recommendedName>
    <alternativeName>
        <fullName evidence="3">30S ribosomal protein S20</fullName>
    </alternativeName>
</protein>
<accession>Q1GC53</accession>
<proteinExistence type="inferred from homology"/>
<keyword id="KW-1185">Reference proteome</keyword>
<keyword id="KW-0687">Ribonucleoprotein</keyword>
<keyword id="KW-0689">Ribosomal protein</keyword>
<keyword id="KW-0694">RNA-binding</keyword>
<keyword id="KW-0699">rRNA-binding</keyword>
<reference key="1">
    <citation type="submission" date="2006-05" db="EMBL/GenBank/DDBJ databases">
        <title>Complete sequence of chromosome of Silicibacter sp. TM1040.</title>
        <authorList>
            <consortium name="US DOE Joint Genome Institute"/>
            <person name="Copeland A."/>
            <person name="Lucas S."/>
            <person name="Lapidus A."/>
            <person name="Barry K."/>
            <person name="Detter J.C."/>
            <person name="Glavina del Rio T."/>
            <person name="Hammon N."/>
            <person name="Israni S."/>
            <person name="Dalin E."/>
            <person name="Tice H."/>
            <person name="Pitluck S."/>
            <person name="Brettin T."/>
            <person name="Bruce D."/>
            <person name="Han C."/>
            <person name="Tapia R."/>
            <person name="Goodwin L."/>
            <person name="Thompson L.S."/>
            <person name="Gilna P."/>
            <person name="Schmutz J."/>
            <person name="Larimer F."/>
            <person name="Land M."/>
            <person name="Hauser L."/>
            <person name="Kyrpides N."/>
            <person name="Kim E."/>
            <person name="Belas R."/>
            <person name="Moran M.A."/>
            <person name="Buchan A."/>
            <person name="Gonzalez J.M."/>
            <person name="Schell M.A."/>
            <person name="Sun F."/>
            <person name="Richardson P."/>
        </authorList>
    </citation>
    <scope>NUCLEOTIDE SEQUENCE [LARGE SCALE GENOMIC DNA]</scope>
    <source>
        <strain>TM1040</strain>
    </source>
</reference>